<protein>
    <recommendedName>
        <fullName>Disrupted in renal carcinoma protein 1</fullName>
    </recommendedName>
    <alternativeName>
        <fullName>Disrupted in renal cancer protein</fullName>
    </alternativeName>
</protein>
<keyword id="KW-0160">Chromosomal rearrangement</keyword>
<keyword id="KW-1185">Reference proteome</keyword>
<feature type="chain" id="PRO_0000079912" description="Disrupted in renal carcinoma protein 1">
    <location>
        <begin position="1"/>
        <end position="104"/>
    </location>
</feature>
<feature type="region of interest" description="Disordered" evidence="1">
    <location>
        <begin position="1"/>
        <end position="23"/>
    </location>
</feature>
<feature type="compositionally biased region" description="Polar residues" evidence="1">
    <location>
        <begin position="10"/>
        <end position="19"/>
    </location>
</feature>
<feature type="sequence variant" id="VAR_022549" description="In dbSNP:rs72902678." evidence="2">
    <original>S</original>
    <variation>A</variation>
    <location>
        <position position="51"/>
    </location>
</feature>
<feature type="sequence variant" id="VAR_061641" description="In dbSNP:rs58846152.">
    <original>L</original>
    <variation>S</variation>
    <location>
        <position position="92"/>
    </location>
</feature>
<accession>Q969H9</accession>
<accession>Q08AK1</accession>
<organism>
    <name type="scientific">Homo sapiens</name>
    <name type="common">Human</name>
    <dbReference type="NCBI Taxonomy" id="9606"/>
    <lineage>
        <taxon>Eukaryota</taxon>
        <taxon>Metazoa</taxon>
        <taxon>Chordata</taxon>
        <taxon>Craniata</taxon>
        <taxon>Vertebrata</taxon>
        <taxon>Euteleostomi</taxon>
        <taxon>Mammalia</taxon>
        <taxon>Eutheria</taxon>
        <taxon>Euarchontoglires</taxon>
        <taxon>Primates</taxon>
        <taxon>Haplorrhini</taxon>
        <taxon>Catarrhini</taxon>
        <taxon>Hominidae</taxon>
        <taxon>Homo</taxon>
    </lineage>
</organism>
<comment type="tissue specificity">
    <text evidence="2">Expressed at low steady-state level in adult placenta, testis, ovary, prostate, fetal kidney, spleen and skeletal muscle.</text>
</comment>
<comment type="disease">
    <text evidence="2">A chromosomal aberration involving DIRC1 is associated with familial clear cell renal carcinoma (PubMed:11587072). Translocation t(2;3)(q33;q21) (PubMed:11587072).</text>
</comment>
<comment type="online information" name="Atlas of Genetics and Cytogenetics in Oncology and Haematology">
    <link uri="https://atlasgeneticsoncology.org/gene/499/DIRC1"/>
</comment>
<gene>
    <name type="primary">DIRC1</name>
</gene>
<reference key="1">
    <citation type="journal article" date="2001" name="J. Hum. Genet.">
        <title>The DIRC1 gene at chromosome 2q33 spans a familial RCC-associated t(2;3)(q33;q21) chromosome translocation.</title>
        <authorList>
            <person name="Druck T."/>
            <person name="Podolski J."/>
            <person name="Byrski T."/>
            <person name="Wyrwicz L."/>
            <person name="Zajaczek S."/>
            <person name="Kata G."/>
            <person name="Borowka A."/>
            <person name="Lubinski J."/>
            <person name="Huebner K."/>
        </authorList>
    </citation>
    <scope>NUCLEOTIDE SEQUENCE [GENOMIC DNA / MRNA]</scope>
    <scope>TISSUE SPECIFICITY</scope>
    <scope>VARIANT ALA-51</scope>
    <scope>CHROMOSOMAL TRANSLOCATION</scope>
</reference>
<reference key="2">
    <citation type="journal article" date="2005" name="Nature">
        <title>Generation and annotation of the DNA sequences of human chromosomes 2 and 4.</title>
        <authorList>
            <person name="Hillier L.W."/>
            <person name="Graves T.A."/>
            <person name="Fulton R.S."/>
            <person name="Fulton L.A."/>
            <person name="Pepin K.H."/>
            <person name="Minx P."/>
            <person name="Wagner-McPherson C."/>
            <person name="Layman D."/>
            <person name="Wylie K."/>
            <person name="Sekhon M."/>
            <person name="Becker M.C."/>
            <person name="Fewell G.A."/>
            <person name="Delehaunty K.D."/>
            <person name="Miner T.L."/>
            <person name="Nash W.E."/>
            <person name="Kremitzki C."/>
            <person name="Oddy L."/>
            <person name="Du H."/>
            <person name="Sun H."/>
            <person name="Bradshaw-Cordum H."/>
            <person name="Ali J."/>
            <person name="Carter J."/>
            <person name="Cordes M."/>
            <person name="Harris A."/>
            <person name="Isak A."/>
            <person name="van Brunt A."/>
            <person name="Nguyen C."/>
            <person name="Du F."/>
            <person name="Courtney L."/>
            <person name="Kalicki J."/>
            <person name="Ozersky P."/>
            <person name="Abbott S."/>
            <person name="Armstrong J."/>
            <person name="Belter E.A."/>
            <person name="Caruso L."/>
            <person name="Cedroni M."/>
            <person name="Cotton M."/>
            <person name="Davidson T."/>
            <person name="Desai A."/>
            <person name="Elliott G."/>
            <person name="Erb T."/>
            <person name="Fronick C."/>
            <person name="Gaige T."/>
            <person name="Haakenson W."/>
            <person name="Haglund K."/>
            <person name="Holmes A."/>
            <person name="Harkins R."/>
            <person name="Kim K."/>
            <person name="Kruchowski S.S."/>
            <person name="Strong C.M."/>
            <person name="Grewal N."/>
            <person name="Goyea E."/>
            <person name="Hou S."/>
            <person name="Levy A."/>
            <person name="Martinka S."/>
            <person name="Mead K."/>
            <person name="McLellan M.D."/>
            <person name="Meyer R."/>
            <person name="Randall-Maher J."/>
            <person name="Tomlinson C."/>
            <person name="Dauphin-Kohlberg S."/>
            <person name="Kozlowicz-Reilly A."/>
            <person name="Shah N."/>
            <person name="Swearengen-Shahid S."/>
            <person name="Snider J."/>
            <person name="Strong J.T."/>
            <person name="Thompson J."/>
            <person name="Yoakum M."/>
            <person name="Leonard S."/>
            <person name="Pearman C."/>
            <person name="Trani L."/>
            <person name="Radionenko M."/>
            <person name="Waligorski J.E."/>
            <person name="Wang C."/>
            <person name="Rock S.M."/>
            <person name="Tin-Wollam A.-M."/>
            <person name="Maupin R."/>
            <person name="Latreille P."/>
            <person name="Wendl M.C."/>
            <person name="Yang S.-P."/>
            <person name="Pohl C."/>
            <person name="Wallis J.W."/>
            <person name="Spieth J."/>
            <person name="Bieri T.A."/>
            <person name="Berkowicz N."/>
            <person name="Nelson J.O."/>
            <person name="Osborne J."/>
            <person name="Ding L."/>
            <person name="Meyer R."/>
            <person name="Sabo A."/>
            <person name="Shotland Y."/>
            <person name="Sinha P."/>
            <person name="Wohldmann P.E."/>
            <person name="Cook L.L."/>
            <person name="Hickenbotham M.T."/>
            <person name="Eldred J."/>
            <person name="Williams D."/>
            <person name="Jones T.A."/>
            <person name="She X."/>
            <person name="Ciccarelli F.D."/>
            <person name="Izaurralde E."/>
            <person name="Taylor J."/>
            <person name="Schmutz J."/>
            <person name="Myers R.M."/>
            <person name="Cox D.R."/>
            <person name="Huang X."/>
            <person name="McPherson J.D."/>
            <person name="Mardis E.R."/>
            <person name="Clifton S.W."/>
            <person name="Warren W.C."/>
            <person name="Chinwalla A.T."/>
            <person name="Eddy S.R."/>
            <person name="Marra M.A."/>
            <person name="Ovcharenko I."/>
            <person name="Furey T.S."/>
            <person name="Miller W."/>
            <person name="Eichler E.E."/>
            <person name="Bork P."/>
            <person name="Suyama M."/>
            <person name="Torrents D."/>
            <person name="Waterston R.H."/>
            <person name="Wilson R.K."/>
        </authorList>
    </citation>
    <scope>NUCLEOTIDE SEQUENCE [LARGE SCALE GENOMIC DNA]</scope>
</reference>
<reference key="3">
    <citation type="journal article" date="2004" name="Genome Res.">
        <title>The status, quality, and expansion of the NIH full-length cDNA project: the Mammalian Gene Collection (MGC).</title>
        <authorList>
            <consortium name="The MGC Project Team"/>
        </authorList>
    </citation>
    <scope>NUCLEOTIDE SEQUENCE [LARGE SCALE MRNA]</scope>
</reference>
<proteinExistence type="evidence at transcript level"/>
<evidence type="ECO:0000256" key="1">
    <source>
        <dbReference type="SAM" id="MobiDB-lite"/>
    </source>
</evidence>
<evidence type="ECO:0000269" key="2">
    <source>
    </source>
</evidence>
<sequence length="104" mass="11440">MPEAHMQPAKLQTSLPTTDHGSKKPVSCYLPPLSNAHPMCIEVQNAQNCSSAAATLEPSIISDTCFYKPITKDQLSSRSELNTVRLKCLNSLRGWKILNQLSLT</sequence>
<dbReference type="EMBL" id="AY039011">
    <property type="protein sequence ID" value="AAK83469.1"/>
    <property type="molecule type" value="mRNA"/>
</dbReference>
<dbReference type="EMBL" id="AY039013">
    <property type="protein sequence ID" value="AAK83468.1"/>
    <property type="molecule type" value="Genomic_DNA"/>
</dbReference>
<dbReference type="EMBL" id="AC079613">
    <property type="protein sequence ID" value="AAY15021.1"/>
    <property type="molecule type" value="Genomic_DNA"/>
</dbReference>
<dbReference type="EMBL" id="BC125137">
    <property type="protein sequence ID" value="AAI25138.1"/>
    <property type="molecule type" value="mRNA"/>
</dbReference>
<dbReference type="RefSeq" id="NP_443184.1">
    <property type="nucleotide sequence ID" value="NM_052952.2"/>
</dbReference>
<dbReference type="RefSeq" id="XP_016858770.1">
    <property type="nucleotide sequence ID" value="XM_017003281.1"/>
</dbReference>
<dbReference type="BioGRID" id="125473">
    <property type="interactions" value="1"/>
</dbReference>
<dbReference type="STRING" id="9606.ENSP00000307860"/>
<dbReference type="BioMuta" id="DIRC1"/>
<dbReference type="PaxDb" id="9606-ENSP00000307860"/>
<dbReference type="UCSC" id="uc002uqi.2">
    <property type="organism name" value="human"/>
</dbReference>
<dbReference type="AGR" id="HGNC:15760"/>
<dbReference type="GeneCards" id="DIRC1"/>
<dbReference type="HGNC" id="HGNC:15760">
    <property type="gene designation" value="DIRC1"/>
</dbReference>
<dbReference type="MIM" id="606423">
    <property type="type" value="gene"/>
</dbReference>
<dbReference type="neXtProt" id="NX_Q969H9"/>
<dbReference type="PharmGKB" id="PA27340"/>
<dbReference type="eggNOG" id="ENOG502TJ20">
    <property type="taxonomic scope" value="Eukaryota"/>
</dbReference>
<dbReference type="HOGENOM" id="CLU_2249167_0_0_1"/>
<dbReference type="InParanoid" id="Q969H9"/>
<dbReference type="PAN-GO" id="Q969H9">
    <property type="GO annotations" value="0 GO annotations based on evolutionary models"/>
</dbReference>
<dbReference type="PathwayCommons" id="Q969H9"/>
<dbReference type="BioGRID-ORCS" id="116093">
    <property type="hits" value="14 hits in 1135 CRISPR screens"/>
</dbReference>
<dbReference type="ChiTaRS" id="DIRC1">
    <property type="organism name" value="human"/>
</dbReference>
<dbReference type="GenomeRNAi" id="116093"/>
<dbReference type="Pharos" id="Q969H9">
    <property type="development level" value="Tdark"/>
</dbReference>
<dbReference type="PRO" id="PR:Q969H9"/>
<dbReference type="Proteomes" id="UP000005640">
    <property type="component" value="Chromosome 2"/>
</dbReference>
<dbReference type="RNAct" id="Q969H9">
    <property type="molecule type" value="protein"/>
</dbReference>
<name>DIRC1_HUMAN</name>